<sequence>MTASSWELLALYLGALLLAAWPLGIWLARISSGRLPGWMQRVEAPLLRLAGTSADQAMNWWQYALALLAFNALGLLAVYALQRLQAVLPLNPAGMAAISPDSAFNTAISFVSNTNWQGYGGEASMSYLTQMLALAVQNFLSAATGIAVVFALFRGFAARATGAIGNFWVDVTRITAWLLLPLSLVFALFLAGNGVIQNFDAYKDVATLEATSYQQPKTGLDGQPLKDAQGAAVMENVRTDKQTLAMGPVASQEAIKMLGTNGGGFFNANSAHPYENPNALTNFFQMLAIFLIPAALCFAFGREVGDLRQGWAVLAAMTVMFVIAVVAITPAEQAGNPLLTPLGVDQAASALQAGGNMEGKETRFGINASSLFAVITTAASCGAVIAMHDSFTPLGGMVPMVMMQLGEVVFGGTGTGLYGMLIFAILAVFISGLMIGRTPEYLGKKIESHEMKLTSIAILVTPILVLAGTAVAVLAGAGRAGVANPGAHGFSEILYALSSAGNNNGSAFAGLSANTPFYNTLLGLAMWLGRFGVIVPVLAIAGSLAAKKRLPVTPGTMPTHGPLFVLLLIGTVLLVGLLNYVPALALGPVVEHLMLWPAH</sequence>
<evidence type="ECO:0000255" key="1">
    <source>
        <dbReference type="HAMAP-Rule" id="MF_00275"/>
    </source>
</evidence>
<feature type="chain" id="PRO_1000022239" description="Potassium-transporting ATPase potassium-binding subunit">
    <location>
        <begin position="1"/>
        <end position="599"/>
    </location>
</feature>
<feature type="transmembrane region" description="Helical" evidence="1">
    <location>
        <begin position="8"/>
        <end position="28"/>
    </location>
</feature>
<feature type="transmembrane region" description="Helical" evidence="1">
    <location>
        <begin position="61"/>
        <end position="81"/>
    </location>
</feature>
<feature type="transmembrane region" description="Helical" evidence="1">
    <location>
        <begin position="133"/>
        <end position="153"/>
    </location>
</feature>
<feature type="transmembrane region" description="Helical" evidence="1">
    <location>
        <begin position="176"/>
        <end position="196"/>
    </location>
</feature>
<feature type="transmembrane region" description="Helical" evidence="1">
    <location>
        <begin position="280"/>
        <end position="300"/>
    </location>
</feature>
<feature type="transmembrane region" description="Helical" evidence="1">
    <location>
        <begin position="311"/>
        <end position="331"/>
    </location>
</feature>
<feature type="transmembrane region" description="Helical" evidence="1">
    <location>
        <begin position="366"/>
        <end position="386"/>
    </location>
</feature>
<feature type="transmembrane region" description="Helical" evidence="1">
    <location>
        <begin position="391"/>
        <end position="411"/>
    </location>
</feature>
<feature type="transmembrane region" description="Helical" evidence="1">
    <location>
        <begin position="416"/>
        <end position="436"/>
    </location>
</feature>
<feature type="transmembrane region" description="Helical" evidence="1">
    <location>
        <begin position="456"/>
        <end position="476"/>
    </location>
</feature>
<feature type="transmembrane region" description="Helical" evidence="1">
    <location>
        <begin position="521"/>
        <end position="541"/>
    </location>
</feature>
<feature type="transmembrane region" description="Helical" evidence="1">
    <location>
        <begin position="563"/>
        <end position="583"/>
    </location>
</feature>
<gene>
    <name evidence="1" type="primary">kdpA</name>
    <name type="ordered locus">Pnap_3604</name>
</gene>
<protein>
    <recommendedName>
        <fullName evidence="1">Potassium-transporting ATPase potassium-binding subunit</fullName>
    </recommendedName>
    <alternativeName>
        <fullName evidence="1">ATP phosphohydrolase [potassium-transporting] A chain</fullName>
    </alternativeName>
    <alternativeName>
        <fullName evidence="1">Potassium-binding and translocating subunit A</fullName>
    </alternativeName>
    <alternativeName>
        <fullName evidence="1">Potassium-translocating ATPase A chain</fullName>
    </alternativeName>
</protein>
<name>KDPA_POLNA</name>
<comment type="function">
    <text evidence="1">Part of the high-affinity ATP-driven potassium transport (or Kdp) system, which catalyzes the hydrolysis of ATP coupled with the electrogenic transport of potassium into the cytoplasm. This subunit binds the periplasmic potassium ions and delivers the ions to the membrane domain of KdpB through an intramembrane tunnel.</text>
</comment>
<comment type="subunit">
    <text evidence="1">The system is composed of three essential subunits: KdpA, KdpB and KdpC.</text>
</comment>
<comment type="subcellular location">
    <subcellularLocation>
        <location evidence="1">Cell inner membrane</location>
        <topology evidence="1">Multi-pass membrane protein</topology>
    </subcellularLocation>
</comment>
<comment type="similarity">
    <text evidence="1">Belongs to the KdpA family.</text>
</comment>
<accession>A1VTC2</accession>
<organism>
    <name type="scientific">Polaromonas naphthalenivorans (strain CJ2)</name>
    <dbReference type="NCBI Taxonomy" id="365044"/>
    <lineage>
        <taxon>Bacteria</taxon>
        <taxon>Pseudomonadati</taxon>
        <taxon>Pseudomonadota</taxon>
        <taxon>Betaproteobacteria</taxon>
        <taxon>Burkholderiales</taxon>
        <taxon>Comamonadaceae</taxon>
        <taxon>Polaromonas</taxon>
    </lineage>
</organism>
<dbReference type="EMBL" id="CP000529">
    <property type="protein sequence ID" value="ABM38900.1"/>
    <property type="molecule type" value="Genomic_DNA"/>
</dbReference>
<dbReference type="RefSeq" id="WP_011802970.1">
    <property type="nucleotide sequence ID" value="NC_008781.1"/>
</dbReference>
<dbReference type="SMR" id="A1VTC2"/>
<dbReference type="STRING" id="365044.Pnap_3604"/>
<dbReference type="KEGG" id="pna:Pnap_3604"/>
<dbReference type="eggNOG" id="COG2060">
    <property type="taxonomic scope" value="Bacteria"/>
</dbReference>
<dbReference type="HOGENOM" id="CLU_018614_3_0_4"/>
<dbReference type="OrthoDB" id="9763796at2"/>
<dbReference type="Proteomes" id="UP000000644">
    <property type="component" value="Chromosome"/>
</dbReference>
<dbReference type="GO" id="GO:0005886">
    <property type="term" value="C:plasma membrane"/>
    <property type="evidence" value="ECO:0007669"/>
    <property type="project" value="UniProtKB-SubCell"/>
</dbReference>
<dbReference type="GO" id="GO:0008556">
    <property type="term" value="F:P-type potassium transmembrane transporter activity"/>
    <property type="evidence" value="ECO:0007669"/>
    <property type="project" value="InterPro"/>
</dbReference>
<dbReference type="GO" id="GO:0030955">
    <property type="term" value="F:potassium ion binding"/>
    <property type="evidence" value="ECO:0007669"/>
    <property type="project" value="UniProtKB-UniRule"/>
</dbReference>
<dbReference type="HAMAP" id="MF_00275">
    <property type="entry name" value="KdpA"/>
    <property type="match status" value="1"/>
</dbReference>
<dbReference type="InterPro" id="IPR004623">
    <property type="entry name" value="KdpA"/>
</dbReference>
<dbReference type="NCBIfam" id="TIGR00680">
    <property type="entry name" value="kdpA"/>
    <property type="match status" value="1"/>
</dbReference>
<dbReference type="PANTHER" id="PTHR30607">
    <property type="entry name" value="POTASSIUM-TRANSPORTING ATPASE A CHAIN"/>
    <property type="match status" value="1"/>
</dbReference>
<dbReference type="PANTHER" id="PTHR30607:SF2">
    <property type="entry name" value="POTASSIUM-TRANSPORTING ATPASE POTASSIUM-BINDING SUBUNIT"/>
    <property type="match status" value="1"/>
</dbReference>
<dbReference type="Pfam" id="PF03814">
    <property type="entry name" value="KdpA"/>
    <property type="match status" value="1"/>
</dbReference>
<dbReference type="PIRSF" id="PIRSF001294">
    <property type="entry name" value="K_ATPaseA"/>
    <property type="match status" value="1"/>
</dbReference>
<proteinExistence type="inferred from homology"/>
<reference key="1">
    <citation type="journal article" date="2009" name="Environ. Microbiol.">
        <title>The genome of Polaromonas naphthalenivorans strain CJ2, isolated from coal tar-contaminated sediment, reveals physiological and metabolic versatility and evolution through extensive horizontal gene transfer.</title>
        <authorList>
            <person name="Yagi J.M."/>
            <person name="Sims D."/>
            <person name="Brettin T."/>
            <person name="Bruce D."/>
            <person name="Madsen E.L."/>
        </authorList>
    </citation>
    <scope>NUCLEOTIDE SEQUENCE [LARGE SCALE GENOMIC DNA]</scope>
    <source>
        <strain>CJ2</strain>
    </source>
</reference>
<keyword id="KW-0997">Cell inner membrane</keyword>
<keyword id="KW-1003">Cell membrane</keyword>
<keyword id="KW-0406">Ion transport</keyword>
<keyword id="KW-0472">Membrane</keyword>
<keyword id="KW-0630">Potassium</keyword>
<keyword id="KW-0633">Potassium transport</keyword>
<keyword id="KW-1185">Reference proteome</keyword>
<keyword id="KW-0812">Transmembrane</keyword>
<keyword id="KW-1133">Transmembrane helix</keyword>
<keyword id="KW-0813">Transport</keyword>